<protein>
    <recommendedName>
        <fullName evidence="1">Outer-membrane lipoprotein LolB</fullName>
    </recommendedName>
</protein>
<accession>Q8CW45</accession>
<gene>
    <name evidence="1" type="primary">lolB</name>
    <name type="synonym">hemM</name>
    <name type="ordered locus">c1667</name>
</gene>
<name>LOLB_ECOL6</name>
<feature type="signal peptide" evidence="1">
    <location>
        <begin position="1"/>
        <end position="21"/>
    </location>
</feature>
<feature type="chain" id="PRO_0000018297" description="Outer-membrane lipoprotein LolB">
    <location>
        <begin position="22"/>
        <end position="207"/>
    </location>
</feature>
<feature type="lipid moiety-binding region" description="N-palmitoyl cysteine" evidence="1">
    <location>
        <position position="22"/>
    </location>
</feature>
<feature type="lipid moiety-binding region" description="S-diacylglycerol cysteine" evidence="1">
    <location>
        <position position="22"/>
    </location>
</feature>
<dbReference type="EMBL" id="AE014075">
    <property type="protein sequence ID" value="AAN80132.1"/>
    <property type="status" value="ALT_INIT"/>
    <property type="molecule type" value="Genomic_DNA"/>
</dbReference>
<dbReference type="RefSeq" id="WP_001130677.1">
    <property type="nucleotide sequence ID" value="NZ_CP051263.1"/>
</dbReference>
<dbReference type="SMR" id="Q8CW45"/>
<dbReference type="STRING" id="199310.c1667"/>
<dbReference type="KEGG" id="ecc:c1667"/>
<dbReference type="eggNOG" id="COG3017">
    <property type="taxonomic scope" value="Bacteria"/>
</dbReference>
<dbReference type="HOGENOM" id="CLU_092816_1_1_6"/>
<dbReference type="Proteomes" id="UP000001410">
    <property type="component" value="Chromosome"/>
</dbReference>
<dbReference type="GO" id="GO:0009279">
    <property type="term" value="C:cell outer membrane"/>
    <property type="evidence" value="ECO:0007669"/>
    <property type="project" value="UniProtKB-SubCell"/>
</dbReference>
<dbReference type="GO" id="GO:0044874">
    <property type="term" value="P:lipoprotein localization to outer membrane"/>
    <property type="evidence" value="ECO:0007669"/>
    <property type="project" value="UniProtKB-UniRule"/>
</dbReference>
<dbReference type="GO" id="GO:0015031">
    <property type="term" value="P:protein transport"/>
    <property type="evidence" value="ECO:0007669"/>
    <property type="project" value="UniProtKB-KW"/>
</dbReference>
<dbReference type="CDD" id="cd16326">
    <property type="entry name" value="LolB"/>
    <property type="match status" value="1"/>
</dbReference>
<dbReference type="FunFam" id="2.50.20.10:FF:000002">
    <property type="entry name" value="Outer-membrane lipoprotein LolB"/>
    <property type="match status" value="1"/>
</dbReference>
<dbReference type="Gene3D" id="2.50.20.10">
    <property type="entry name" value="Lipoprotein localisation LolA/LolB/LppX"/>
    <property type="match status" value="1"/>
</dbReference>
<dbReference type="HAMAP" id="MF_00233">
    <property type="entry name" value="LolB"/>
    <property type="match status" value="1"/>
</dbReference>
<dbReference type="InterPro" id="IPR029046">
    <property type="entry name" value="LolA/LolB/LppX"/>
</dbReference>
<dbReference type="InterPro" id="IPR004565">
    <property type="entry name" value="OM_lipoprot_LolB"/>
</dbReference>
<dbReference type="NCBIfam" id="TIGR00548">
    <property type="entry name" value="lolB"/>
    <property type="match status" value="1"/>
</dbReference>
<dbReference type="Pfam" id="PF03550">
    <property type="entry name" value="LolB"/>
    <property type="match status" value="1"/>
</dbReference>
<dbReference type="SUPFAM" id="SSF89392">
    <property type="entry name" value="Prokaryotic lipoproteins and lipoprotein localization factors"/>
    <property type="match status" value="1"/>
</dbReference>
<dbReference type="PROSITE" id="PS51257">
    <property type="entry name" value="PROKAR_LIPOPROTEIN"/>
    <property type="match status" value="1"/>
</dbReference>
<proteinExistence type="inferred from homology"/>
<evidence type="ECO:0000255" key="1">
    <source>
        <dbReference type="HAMAP-Rule" id="MF_00233"/>
    </source>
</evidence>
<evidence type="ECO:0000305" key="2"/>
<keyword id="KW-0998">Cell outer membrane</keyword>
<keyword id="KW-0143">Chaperone</keyword>
<keyword id="KW-0449">Lipoprotein</keyword>
<keyword id="KW-0472">Membrane</keyword>
<keyword id="KW-0564">Palmitate</keyword>
<keyword id="KW-0653">Protein transport</keyword>
<keyword id="KW-1185">Reference proteome</keyword>
<keyword id="KW-0732">Signal</keyword>
<keyword id="KW-0813">Transport</keyword>
<organism>
    <name type="scientific">Escherichia coli O6:H1 (strain CFT073 / ATCC 700928 / UPEC)</name>
    <dbReference type="NCBI Taxonomy" id="199310"/>
    <lineage>
        <taxon>Bacteria</taxon>
        <taxon>Pseudomonadati</taxon>
        <taxon>Pseudomonadota</taxon>
        <taxon>Gammaproteobacteria</taxon>
        <taxon>Enterobacterales</taxon>
        <taxon>Enterobacteriaceae</taxon>
        <taxon>Escherichia</taxon>
    </lineage>
</organism>
<reference key="1">
    <citation type="journal article" date="2002" name="Proc. Natl. Acad. Sci. U.S.A.">
        <title>Extensive mosaic structure revealed by the complete genome sequence of uropathogenic Escherichia coli.</title>
        <authorList>
            <person name="Welch R.A."/>
            <person name="Burland V."/>
            <person name="Plunkett G. III"/>
            <person name="Redford P."/>
            <person name="Roesch P."/>
            <person name="Rasko D."/>
            <person name="Buckles E.L."/>
            <person name="Liou S.-R."/>
            <person name="Boutin A."/>
            <person name="Hackett J."/>
            <person name="Stroud D."/>
            <person name="Mayhew G.F."/>
            <person name="Rose D.J."/>
            <person name="Zhou S."/>
            <person name="Schwartz D.C."/>
            <person name="Perna N.T."/>
            <person name="Mobley H.L.T."/>
            <person name="Donnenberg M.S."/>
            <person name="Blattner F.R."/>
        </authorList>
    </citation>
    <scope>NUCLEOTIDE SEQUENCE [LARGE SCALE GENOMIC DNA]</scope>
    <source>
        <strain>CFT073 / ATCC 700928 / UPEC</strain>
    </source>
</reference>
<comment type="function">
    <text evidence="1">Plays a critical role in the incorporation of lipoproteins in the outer membrane after they are released by the LolA protein.</text>
</comment>
<comment type="subunit">
    <text evidence="1">Monomer.</text>
</comment>
<comment type="subcellular location">
    <subcellularLocation>
        <location evidence="1">Cell outer membrane</location>
        <topology evidence="1">Lipid-anchor</topology>
    </subcellularLocation>
</comment>
<comment type="similarity">
    <text evidence="1">Belongs to the LolB family.</text>
</comment>
<comment type="sequence caution" evidence="2">
    <conflict type="erroneous initiation">
        <sequence resource="EMBL-CDS" id="AAN80132"/>
    </conflict>
</comment>
<sequence length="207" mass="23615">MPLPDFRFIRLLPLAALVLTACSITTPKGPGKSPDSPQWRQHQQDVRNLNQYQTRGAFAYISDQQKVYARFFWQQTGQDRYRLLLTNPLGSTELELNAQPGNVQLVDNKGQRYTSDDAEEMIGKLTGMPIPLNSLRQWILGLPGDATDYKLDDQYRLSEITYSQNGKNWKVVYGGYDTKTQPAMPANMELTDGGQRIKLKMDNWIVK</sequence>